<protein>
    <recommendedName>
        <fullName>Non-structural protein 7b</fullName>
        <shortName>ns7b</shortName>
    </recommendedName>
    <alternativeName>
        <fullName>Accessory protein 7b</fullName>
    </alternativeName>
</protein>
<name>NS7B_CVCAK</name>
<sequence>MKFLIFVLCLSLVNGYGIRRSIQEYDPKESHEHPTMTWELLEKFVGSTLYITTNQILSLPLGAEIYCDEIEGFPCSWPGYKAYAYNHIDYHFDLSSPFYSFVDKFYISLGDREEKIHLRVVGATPKDKRLTVGCRTSFSVNLPIGTQIYHDKDMQHLVEGRHLECAHRVYFVKYCPSHSHGYCFKDKLKVYDLKRVKSRKCFEKINQQQKSEL</sequence>
<proteinExistence type="inferred from homology"/>
<organism>
    <name type="scientific">Canine coronavirus (strain K378)</name>
    <name type="common">CCoV</name>
    <name type="synonym">Canine enteric coronavirus</name>
    <dbReference type="NCBI Taxonomy" id="33732"/>
    <lineage>
        <taxon>Viruses</taxon>
        <taxon>Riboviria</taxon>
        <taxon>Orthornavirae</taxon>
        <taxon>Pisuviricota</taxon>
        <taxon>Pisoniviricetes</taxon>
        <taxon>Nidovirales</taxon>
        <taxon>Cornidovirineae</taxon>
        <taxon>Coronaviridae</taxon>
        <taxon>Orthocoronavirinae</taxon>
        <taxon>Alphacoronavirus</taxon>
        <taxon>Tegacovirus</taxon>
        <taxon>Alphacoronavirus 1</taxon>
    </lineage>
</organism>
<accession>Q04704</accession>
<reference key="1">
    <citation type="journal article" date="1992" name="Virology">
        <title>Genomic organization and expression of the 3' end of the canine and feline enteric coronaviruses.</title>
        <authorList>
            <person name="Vennema H."/>
            <person name="Rossen J.W.A."/>
            <person name="Wesseling J."/>
            <person name="Horzinek M.C."/>
            <person name="Rottier P.J.M."/>
        </authorList>
    </citation>
    <scope>NUCLEOTIDE SEQUENCE [GENOMIC RNA]</scope>
</reference>
<dbReference type="EMBL" id="X66717">
    <property type="protein sequence ID" value="CAA47248.1"/>
    <property type="molecule type" value="Genomic_RNA"/>
</dbReference>
<dbReference type="PIR" id="C44056">
    <property type="entry name" value="C44056"/>
</dbReference>
<dbReference type="InterPro" id="IPR004945">
    <property type="entry name" value="Corona_6B_7B"/>
</dbReference>
<dbReference type="Pfam" id="PF03262">
    <property type="entry name" value="Corona_6B_7B"/>
    <property type="match status" value="1"/>
</dbReference>
<keyword id="KW-0732">Signal</keyword>
<feature type="signal peptide" evidence="1">
    <location>
        <begin position="1"/>
        <end position="15"/>
    </location>
</feature>
<feature type="chain" id="PRO_0000106106" description="Non-structural protein 7b">
    <location>
        <begin position="16"/>
        <end position="213"/>
    </location>
</feature>
<organismHost>
    <name type="scientific">Canis lupus familiaris</name>
    <name type="common">Dog</name>
    <name type="synonym">Canis familiaris</name>
    <dbReference type="NCBI Taxonomy" id="9615"/>
</organismHost>
<gene>
    <name type="ORF">7b</name>
</gene>
<evidence type="ECO:0000255" key="1"/>